<name>AROK_HELPG</name>
<sequence length="162" mass="18379">MQHLVLIGFMGSGKSSLAQELGLALKLEVLDTDMIISERVGLSVREIFEELGEDNFRMFEKNLIDELKTLKTPHVISTGGGIVMHDNLKGLGTTFYLKIDFETLIKRLNQKEREKRPLLNNLTQAKELFEKRQALYEKNASFIIDARGGLNNSLKQVLQFIA</sequence>
<feature type="chain" id="PRO_1000094394" description="Shikimate kinase">
    <location>
        <begin position="1"/>
        <end position="162"/>
    </location>
</feature>
<feature type="binding site" evidence="1">
    <location>
        <begin position="11"/>
        <end position="16"/>
    </location>
    <ligand>
        <name>ATP</name>
        <dbReference type="ChEBI" id="CHEBI:30616"/>
    </ligand>
</feature>
<feature type="binding site" evidence="1">
    <location>
        <position position="15"/>
    </location>
    <ligand>
        <name>Mg(2+)</name>
        <dbReference type="ChEBI" id="CHEBI:18420"/>
    </ligand>
</feature>
<feature type="binding site" evidence="1">
    <location>
        <position position="33"/>
    </location>
    <ligand>
        <name>substrate</name>
    </ligand>
</feature>
<feature type="binding site" evidence="1">
    <location>
        <position position="57"/>
    </location>
    <ligand>
        <name>substrate</name>
    </ligand>
</feature>
<feature type="binding site" evidence="1">
    <location>
        <position position="80"/>
    </location>
    <ligand>
        <name>substrate</name>
    </ligand>
</feature>
<feature type="binding site" evidence="1">
    <location>
        <position position="116"/>
    </location>
    <ligand>
        <name>ATP</name>
        <dbReference type="ChEBI" id="CHEBI:30616"/>
    </ligand>
</feature>
<feature type="binding site" evidence="1">
    <location>
        <position position="132"/>
    </location>
    <ligand>
        <name>substrate</name>
    </ligand>
</feature>
<comment type="function">
    <text evidence="1">Catalyzes the specific phosphorylation of the 3-hydroxyl group of shikimic acid using ATP as a cosubstrate.</text>
</comment>
<comment type="catalytic activity">
    <reaction evidence="1">
        <text>shikimate + ATP = 3-phosphoshikimate + ADP + H(+)</text>
        <dbReference type="Rhea" id="RHEA:13121"/>
        <dbReference type="ChEBI" id="CHEBI:15378"/>
        <dbReference type="ChEBI" id="CHEBI:30616"/>
        <dbReference type="ChEBI" id="CHEBI:36208"/>
        <dbReference type="ChEBI" id="CHEBI:145989"/>
        <dbReference type="ChEBI" id="CHEBI:456216"/>
        <dbReference type="EC" id="2.7.1.71"/>
    </reaction>
</comment>
<comment type="cofactor">
    <cofactor evidence="1">
        <name>Mg(2+)</name>
        <dbReference type="ChEBI" id="CHEBI:18420"/>
    </cofactor>
    <text evidence="1">Binds 1 Mg(2+) ion per subunit.</text>
</comment>
<comment type="pathway">
    <text evidence="1">Metabolic intermediate biosynthesis; chorismate biosynthesis; chorismate from D-erythrose 4-phosphate and phosphoenolpyruvate: step 5/7.</text>
</comment>
<comment type="subunit">
    <text evidence="1">Monomer.</text>
</comment>
<comment type="subcellular location">
    <subcellularLocation>
        <location evidence="1">Cytoplasm</location>
    </subcellularLocation>
</comment>
<comment type="similarity">
    <text evidence="1">Belongs to the shikimate kinase family.</text>
</comment>
<evidence type="ECO:0000255" key="1">
    <source>
        <dbReference type="HAMAP-Rule" id="MF_00109"/>
    </source>
</evidence>
<proteinExistence type="inferred from homology"/>
<gene>
    <name evidence="1" type="primary">aroK</name>
    <name type="ordered locus">HPG27_144</name>
</gene>
<reference key="1">
    <citation type="journal article" date="2009" name="J. Bacteriol.">
        <title>The complete genome sequence of Helicobacter pylori strain G27.</title>
        <authorList>
            <person name="Baltrus D.A."/>
            <person name="Amieva M.R."/>
            <person name="Covacci A."/>
            <person name="Lowe T.M."/>
            <person name="Merrell D.S."/>
            <person name="Ottemann K.M."/>
            <person name="Stein M."/>
            <person name="Salama N.R."/>
            <person name="Guillemin K."/>
        </authorList>
    </citation>
    <scope>NUCLEOTIDE SEQUENCE [LARGE SCALE GENOMIC DNA]</scope>
    <source>
        <strain>G27</strain>
    </source>
</reference>
<keyword id="KW-0028">Amino-acid biosynthesis</keyword>
<keyword id="KW-0057">Aromatic amino acid biosynthesis</keyword>
<keyword id="KW-0067">ATP-binding</keyword>
<keyword id="KW-0963">Cytoplasm</keyword>
<keyword id="KW-0418">Kinase</keyword>
<keyword id="KW-0460">Magnesium</keyword>
<keyword id="KW-0479">Metal-binding</keyword>
<keyword id="KW-0547">Nucleotide-binding</keyword>
<keyword id="KW-1185">Reference proteome</keyword>
<keyword id="KW-0808">Transferase</keyword>
<accession>B5Z9T2</accession>
<dbReference type="EC" id="2.7.1.71" evidence="1"/>
<dbReference type="EMBL" id="CP001173">
    <property type="protein sequence ID" value="ACI26912.1"/>
    <property type="molecule type" value="Genomic_DNA"/>
</dbReference>
<dbReference type="RefSeq" id="WP_001164286.1">
    <property type="nucleotide sequence ID" value="NC_011333.1"/>
</dbReference>
<dbReference type="SMR" id="B5Z9T2"/>
<dbReference type="KEGG" id="hpg:HPG27_144"/>
<dbReference type="HOGENOM" id="CLU_057607_4_0_7"/>
<dbReference type="UniPathway" id="UPA00053">
    <property type="reaction ID" value="UER00088"/>
</dbReference>
<dbReference type="Proteomes" id="UP000001735">
    <property type="component" value="Chromosome"/>
</dbReference>
<dbReference type="GO" id="GO:0005829">
    <property type="term" value="C:cytosol"/>
    <property type="evidence" value="ECO:0007669"/>
    <property type="project" value="TreeGrafter"/>
</dbReference>
<dbReference type="GO" id="GO:0005524">
    <property type="term" value="F:ATP binding"/>
    <property type="evidence" value="ECO:0007669"/>
    <property type="project" value="UniProtKB-UniRule"/>
</dbReference>
<dbReference type="GO" id="GO:0000287">
    <property type="term" value="F:magnesium ion binding"/>
    <property type="evidence" value="ECO:0007669"/>
    <property type="project" value="UniProtKB-UniRule"/>
</dbReference>
<dbReference type="GO" id="GO:0004765">
    <property type="term" value="F:shikimate kinase activity"/>
    <property type="evidence" value="ECO:0007669"/>
    <property type="project" value="UniProtKB-UniRule"/>
</dbReference>
<dbReference type="GO" id="GO:0008652">
    <property type="term" value="P:amino acid biosynthetic process"/>
    <property type="evidence" value="ECO:0007669"/>
    <property type="project" value="UniProtKB-KW"/>
</dbReference>
<dbReference type="GO" id="GO:0009073">
    <property type="term" value="P:aromatic amino acid family biosynthetic process"/>
    <property type="evidence" value="ECO:0007669"/>
    <property type="project" value="UniProtKB-KW"/>
</dbReference>
<dbReference type="GO" id="GO:0009423">
    <property type="term" value="P:chorismate biosynthetic process"/>
    <property type="evidence" value="ECO:0007669"/>
    <property type="project" value="UniProtKB-UniRule"/>
</dbReference>
<dbReference type="CDD" id="cd00464">
    <property type="entry name" value="SK"/>
    <property type="match status" value="1"/>
</dbReference>
<dbReference type="FunFam" id="3.40.50.300:FF:001487">
    <property type="entry name" value="Shikimate kinase"/>
    <property type="match status" value="1"/>
</dbReference>
<dbReference type="Gene3D" id="3.40.50.300">
    <property type="entry name" value="P-loop containing nucleotide triphosphate hydrolases"/>
    <property type="match status" value="1"/>
</dbReference>
<dbReference type="HAMAP" id="MF_00109">
    <property type="entry name" value="Shikimate_kinase"/>
    <property type="match status" value="1"/>
</dbReference>
<dbReference type="InterPro" id="IPR027417">
    <property type="entry name" value="P-loop_NTPase"/>
</dbReference>
<dbReference type="InterPro" id="IPR031322">
    <property type="entry name" value="Shikimate/glucono_kinase"/>
</dbReference>
<dbReference type="InterPro" id="IPR000623">
    <property type="entry name" value="Shikimate_kinase/TSH1"/>
</dbReference>
<dbReference type="InterPro" id="IPR023000">
    <property type="entry name" value="Shikimate_kinase_CS"/>
</dbReference>
<dbReference type="PANTHER" id="PTHR21087">
    <property type="entry name" value="SHIKIMATE KINASE"/>
    <property type="match status" value="1"/>
</dbReference>
<dbReference type="PANTHER" id="PTHR21087:SF16">
    <property type="entry name" value="SHIKIMATE KINASE 1, CHLOROPLASTIC"/>
    <property type="match status" value="1"/>
</dbReference>
<dbReference type="Pfam" id="PF01202">
    <property type="entry name" value="SKI"/>
    <property type="match status" value="1"/>
</dbReference>
<dbReference type="PRINTS" id="PR01100">
    <property type="entry name" value="SHIKIMTKNASE"/>
</dbReference>
<dbReference type="SUPFAM" id="SSF52540">
    <property type="entry name" value="P-loop containing nucleoside triphosphate hydrolases"/>
    <property type="match status" value="1"/>
</dbReference>
<dbReference type="PROSITE" id="PS01128">
    <property type="entry name" value="SHIKIMATE_KINASE"/>
    <property type="match status" value="1"/>
</dbReference>
<organism>
    <name type="scientific">Helicobacter pylori (strain G27)</name>
    <dbReference type="NCBI Taxonomy" id="563041"/>
    <lineage>
        <taxon>Bacteria</taxon>
        <taxon>Pseudomonadati</taxon>
        <taxon>Campylobacterota</taxon>
        <taxon>Epsilonproteobacteria</taxon>
        <taxon>Campylobacterales</taxon>
        <taxon>Helicobacteraceae</taxon>
        <taxon>Helicobacter</taxon>
    </lineage>
</organism>
<protein>
    <recommendedName>
        <fullName evidence="1">Shikimate kinase</fullName>
        <shortName evidence="1">SK</shortName>
        <ecNumber evidence="1">2.7.1.71</ecNumber>
    </recommendedName>
</protein>